<evidence type="ECO:0000255" key="1">
    <source>
        <dbReference type="HAMAP-Rule" id="MF_03103"/>
    </source>
</evidence>
<evidence type="ECO:0000256" key="2">
    <source>
        <dbReference type="SAM" id="MobiDB-lite"/>
    </source>
</evidence>
<protein>
    <recommendedName>
        <fullName evidence="1">Maintenance of mitochondrial morphology protein 1</fullName>
    </recommendedName>
</protein>
<organism>
    <name type="scientific">Podospora anserina (strain S / ATCC MYA-4624 / DSM 980 / FGSC 10383)</name>
    <name type="common">Pleurage anserina</name>
    <dbReference type="NCBI Taxonomy" id="515849"/>
    <lineage>
        <taxon>Eukaryota</taxon>
        <taxon>Fungi</taxon>
        <taxon>Dikarya</taxon>
        <taxon>Ascomycota</taxon>
        <taxon>Pezizomycotina</taxon>
        <taxon>Sordariomycetes</taxon>
        <taxon>Sordariomycetidae</taxon>
        <taxon>Sordariales</taxon>
        <taxon>Podosporaceae</taxon>
        <taxon>Podospora</taxon>
        <taxon>Podospora anserina</taxon>
    </lineage>
</organism>
<keyword id="KW-0256">Endoplasmic reticulum</keyword>
<keyword id="KW-0445">Lipid transport</keyword>
<keyword id="KW-0446">Lipid-binding</keyword>
<keyword id="KW-0472">Membrane</keyword>
<keyword id="KW-1185">Reference proteome</keyword>
<keyword id="KW-0812">Transmembrane</keyword>
<keyword id="KW-1133">Transmembrane helix</keyword>
<keyword id="KW-0813">Transport</keyword>
<name>MMM1_PODAN</name>
<dbReference type="EMBL" id="CU633900">
    <property type="protein sequence ID" value="CAP68457.1"/>
    <property type="molecule type" value="Genomic_DNA"/>
</dbReference>
<dbReference type="EMBL" id="FO904942">
    <property type="protein sequence ID" value="CDP31929.1"/>
    <property type="molecule type" value="Genomic_DNA"/>
</dbReference>
<dbReference type="RefSeq" id="XP_001907784.1">
    <property type="nucleotide sequence ID" value="XM_001907749.1"/>
</dbReference>
<dbReference type="SMR" id="B2AVN3"/>
<dbReference type="FunCoup" id="B2AVN3">
    <property type="interactions" value="63"/>
</dbReference>
<dbReference type="STRING" id="515849.B2AVN3"/>
<dbReference type="GeneID" id="6192571"/>
<dbReference type="KEGG" id="pan:PODANSg4819"/>
<dbReference type="VEuPathDB" id="FungiDB:PODANS_7_2350"/>
<dbReference type="eggNOG" id="ENOG502QUUW">
    <property type="taxonomic scope" value="Eukaryota"/>
</dbReference>
<dbReference type="HOGENOM" id="CLU_032730_1_0_1"/>
<dbReference type="InParanoid" id="B2AVN3"/>
<dbReference type="OrthoDB" id="5599157at2759"/>
<dbReference type="Proteomes" id="UP000001197">
    <property type="component" value="Chromosome 7"/>
</dbReference>
<dbReference type="GO" id="GO:0005789">
    <property type="term" value="C:endoplasmic reticulum membrane"/>
    <property type="evidence" value="ECO:0007669"/>
    <property type="project" value="UniProtKB-SubCell"/>
</dbReference>
<dbReference type="GO" id="GO:0032865">
    <property type="term" value="C:ERMES complex"/>
    <property type="evidence" value="ECO:0007669"/>
    <property type="project" value="UniProtKB-UniRule"/>
</dbReference>
<dbReference type="GO" id="GO:0008289">
    <property type="term" value="F:lipid binding"/>
    <property type="evidence" value="ECO:0007669"/>
    <property type="project" value="UniProtKB-KW"/>
</dbReference>
<dbReference type="GO" id="GO:0006869">
    <property type="term" value="P:lipid transport"/>
    <property type="evidence" value="ECO:0007669"/>
    <property type="project" value="UniProtKB-KW"/>
</dbReference>
<dbReference type="GO" id="GO:0000002">
    <property type="term" value="P:mitochondrial genome maintenance"/>
    <property type="evidence" value="ECO:0007669"/>
    <property type="project" value="UniProtKB-UniRule"/>
</dbReference>
<dbReference type="GO" id="GO:0045040">
    <property type="term" value="P:protein insertion into mitochondrial outer membrane"/>
    <property type="evidence" value="ECO:0007669"/>
    <property type="project" value="UniProtKB-UniRule"/>
</dbReference>
<dbReference type="CDD" id="cd21671">
    <property type="entry name" value="SMP_Mmm1"/>
    <property type="match status" value="1"/>
</dbReference>
<dbReference type="HAMAP" id="MF_03103">
    <property type="entry name" value="Mmm1"/>
    <property type="match status" value="1"/>
</dbReference>
<dbReference type="InterPro" id="IPR027537">
    <property type="entry name" value="Mmm1"/>
</dbReference>
<dbReference type="InterPro" id="IPR019411">
    <property type="entry name" value="MMM1_dom"/>
</dbReference>
<dbReference type="InterPro" id="IPR031468">
    <property type="entry name" value="SMP_LBD"/>
</dbReference>
<dbReference type="PANTHER" id="PTHR13466">
    <property type="entry name" value="TEX2 PROTEIN-RELATED"/>
    <property type="match status" value="1"/>
</dbReference>
<dbReference type="Pfam" id="PF10296">
    <property type="entry name" value="MMM1"/>
    <property type="match status" value="1"/>
</dbReference>
<dbReference type="PROSITE" id="PS51847">
    <property type="entry name" value="SMP"/>
    <property type="match status" value="1"/>
</dbReference>
<feature type="chain" id="PRO_0000384249" description="Maintenance of mitochondrial morphology protein 1">
    <location>
        <begin position="1"/>
        <end position="412"/>
    </location>
</feature>
<feature type="topological domain" description="Lumenal" evidence="1">
    <location>
        <begin position="1"/>
        <end position="19"/>
    </location>
</feature>
<feature type="transmembrane region" description="Helical" evidence="1">
    <location>
        <begin position="20"/>
        <end position="40"/>
    </location>
</feature>
<feature type="topological domain" description="Cytoplasmic" evidence="1">
    <location>
        <begin position="41"/>
        <end position="412"/>
    </location>
</feature>
<feature type="domain" description="SMP-LTD" evidence="1">
    <location>
        <begin position="121"/>
        <end position="337"/>
    </location>
</feature>
<feature type="region of interest" description="Disordered" evidence="2">
    <location>
        <begin position="372"/>
        <end position="412"/>
    </location>
</feature>
<feature type="compositionally biased region" description="Basic and acidic residues" evidence="2">
    <location>
        <begin position="372"/>
        <end position="384"/>
    </location>
</feature>
<comment type="function">
    <text evidence="1">Component of the ERMES/MDM complex, which serves as a molecular tether to connect the endoplasmic reticulum (ER) and mitochondria. Components of this complex are involved in the control of mitochondrial shape and protein biogenesis, and function in nonvesicular lipid trafficking between the ER and mitochondria. The MDM12-MMM1 subcomplex functions in the major beta-barrel assembly pathway that is responsible for biogenesis of all outer membrane beta-barrel proteins, and acts in a late step after the SAM complex. The MDM10-MDM12-MMM1 subcomplex further acts in the TOM40-specific pathway after the action of the MDM12-MMM1 complex. Essential for establishing and maintaining the structure of mitochondria and maintenance of mtDNA nucleoids.</text>
</comment>
<comment type="subunit">
    <text evidence="1">Homodimer. Component of the ER-mitochondria encounter structure (ERMES) or MDM complex, composed of MMM1, MDM10, MDM12 and MDM34. A MMM1 homodimer associates with one molecule of MDM12 on each side in a pairwise head-to-tail manner, and the SMP-LTD domains of MMM1 and MDM12 generate a continuous hydrophobic tunnel for phospholipid trafficking.</text>
</comment>
<comment type="subcellular location">
    <subcellularLocation>
        <location evidence="1">Endoplasmic reticulum membrane</location>
        <topology evidence="1">Single-pass type I membrane protein</topology>
    </subcellularLocation>
    <text evidence="1">The ERMES/MDM complex localizes to a few discrete foci (around 10 per single cell), that represent mitochondria-endoplasmic reticulum junctions. These foci are often found next to mtDNA nucleoids.</text>
</comment>
<comment type="domain">
    <text evidence="1">The SMP-LTD domain is a barrel-like domain that can bind various types of glycerophospholipids in its interior and mediate their transfer between two adjacent bilayers.</text>
</comment>
<comment type="similarity">
    <text evidence="1">Belongs to the MMM1 family.</text>
</comment>
<accession>B2AVN3</accession>
<accession>A0A090CWG4</accession>
<proteinExistence type="inferred from homology"/>
<reference key="1">
    <citation type="journal article" date="2008" name="Genome Biol.">
        <title>The genome sequence of the model ascomycete fungus Podospora anserina.</title>
        <authorList>
            <person name="Espagne E."/>
            <person name="Lespinet O."/>
            <person name="Malagnac F."/>
            <person name="Da Silva C."/>
            <person name="Jaillon O."/>
            <person name="Porcel B.M."/>
            <person name="Couloux A."/>
            <person name="Aury J.-M."/>
            <person name="Segurens B."/>
            <person name="Poulain J."/>
            <person name="Anthouard V."/>
            <person name="Grossetete S."/>
            <person name="Khalili H."/>
            <person name="Coppin E."/>
            <person name="Dequard-Chablat M."/>
            <person name="Picard M."/>
            <person name="Contamine V."/>
            <person name="Arnaise S."/>
            <person name="Bourdais A."/>
            <person name="Berteaux-Lecellier V."/>
            <person name="Gautheret D."/>
            <person name="de Vries R.P."/>
            <person name="Battaglia E."/>
            <person name="Coutinho P.M."/>
            <person name="Danchin E.G.J."/>
            <person name="Henrissat B."/>
            <person name="El Khoury R."/>
            <person name="Sainsard-Chanet A."/>
            <person name="Boivin A."/>
            <person name="Pinan-Lucarre B."/>
            <person name="Sellem C.H."/>
            <person name="Debuchy R."/>
            <person name="Wincker P."/>
            <person name="Weissenbach J."/>
            <person name="Silar P."/>
        </authorList>
    </citation>
    <scope>NUCLEOTIDE SEQUENCE [LARGE SCALE GENOMIC DNA]</scope>
    <source>
        <strain>S / ATCC MYA-4624 / DSM 980 / FGSC 10383</strain>
    </source>
</reference>
<reference key="2">
    <citation type="journal article" date="2014" name="Genetics">
        <title>Maintaining two mating types: Structure of the mating type locus and its role in heterokaryosis in Podospora anserina.</title>
        <authorList>
            <person name="Grognet P."/>
            <person name="Bidard F."/>
            <person name="Kuchly C."/>
            <person name="Tong L.C.H."/>
            <person name="Coppin E."/>
            <person name="Benkhali J.A."/>
            <person name="Couloux A."/>
            <person name="Wincker P."/>
            <person name="Debuchy R."/>
            <person name="Silar P."/>
        </authorList>
    </citation>
    <scope>GENOME REANNOTATION</scope>
    <source>
        <strain>S / ATCC MYA-4624 / DSM 980 / FGSC 10383</strain>
    </source>
</reference>
<sequence>MAQDVCPTRSEPSLSFLQGLILGQLSVVLLIAAFIKFFIFGEAPSAEETASIRATERRSRTLAHKKSLLSLRSAATQRQGSQPPALPALNKKKSSILRSNPPTLTIGSILDKTYYKVDSHQPESLDWFNVLIAQTIAQFRSDAQHDDAILTSLSKTLNGTSRPDFVDEIRVSELSLGEDFPIFSNCRIIPVDEDGLQFGAGKAFDPKQAAREGARLQARMDVDLSDMITLAVETKLLLNFPKRLSAVLPVALAVSVVRFSGTLSISFNPSNPSENTPTKMTFTFLDDYRLDFSIRSLLGSRSRLQDVPKIAQLVESRLHRWFDERCVEPRFQEIELPSMWPRKKNTRGGDEIIANIEQSINKAHGGAIAKEARQELDTETDGLRYRRRPVGDDTYSVSGSMPGSLPGIDMPT</sequence>
<gene>
    <name evidence="1" type="primary">MMM1</name>
    <name type="ordered locus">Pa_7_2350</name>
    <name type="ORF">PODANS_7_2350</name>
</gene>